<sequence>MLQGTCSVLLLWGILGAIQAQQQEVISPDTTERNNNCPEKTDCPIHVYFVLDTSESVTMQSPTDILLFHMKQFVPQFISQLQNEFYLDQVALSWRYGGLHFSDQVEVFSPPGSDRASFIKNLQGISSFRRGTFTDCALANMTEQIRQDRSKGTVHFAVVITDGHVTGSPCGGIKLQAERAREEGIRLFAVAPNQNLKEQGLRDIASTPHELYRNDYATMLPDSTEIDQDTINRIIKVMKHEAYGECYKVSCLEIPGPSGPKGYRGQKGAKGNMGEPGEPGQKGRQGDPGIEGPIGFPGPKGVPGFKGEKGEFGADGRKGAPGLAGKNGTDGQKGKLGRIGPPGCKGDPGNRGPDGYPGEAGSPGERGDQGGKGDPGRPGRRGPPGEIGAKGSKGYQGNSGAPGSPGVKGAKGGPGPRGPKGEPGRRGDPGTKGSPGSDGPKGEKGDPGPEGPRGLAGEVGNKGAKGDRGLPGPRGPQGALGEPGKQGSRGDPGDAGPRGDSGQPGPKGDPGRPGFSYPGPRGAPGEKGEPGPRGPEGGRGDFGLKGEPGRKGEKGEPADPGPPGEPGPRGPRGVPGPEGEPGPPGDPGLTECDVMTYVRETCGCCDCEKRCGALDVVFVIDSSESIGYTNFTLEKNFVINVVNRLGAIAKDPKSETGTRVGVVQYSHEGTFEAIQLDDERIDSLSSFKEAVKNLEWIAGGTWTPSALKFAYDRLIKESRRQKTRVFAVVITDGRHDPRDDDLNLRALCDRDVTVTAIGIGDMFHEKHESENLYSIACDKPQQVRNMTLFSDLVAEKFIDDMEDVLCPDPQIVCPDLPCQTELSVAQCTQRPVDIVFLLDGSERLGEQNFHKARRFVEQVARRLTLARRDDDPLNARVALLQFGGPGEQQVAFPLSHNLTAIHEALETTQYLNSFSHVGAGVVHAINAIVRSPRGGARRHAELSFVFLTDGVTGNDSLHESAHSMRKQNVVPTVLALGSDVDMDVLTTLSLGDRAAVFHEKDYDSLAQPGFFDRFIRWIC</sequence>
<evidence type="ECO:0000255" key="1"/>
<evidence type="ECO:0000255" key="2">
    <source>
        <dbReference type="PROSITE-ProRule" id="PRU00219"/>
    </source>
</evidence>
<evidence type="ECO:0000256" key="3">
    <source>
        <dbReference type="SAM" id="MobiDB-lite"/>
    </source>
</evidence>
<evidence type="ECO:0000269" key="4">
    <source>
    </source>
</evidence>
<evidence type="ECO:0000269" key="5">
    <source>
    </source>
</evidence>
<evidence type="ECO:0000269" key="6">
    <source>
    </source>
</evidence>
<evidence type="ECO:0000269" key="7">
    <source>
    </source>
</evidence>
<evidence type="ECO:0000269" key="8">
    <source>
    </source>
</evidence>
<evidence type="ECO:0000269" key="9">
    <source>
    </source>
</evidence>
<evidence type="ECO:0000269" key="10">
    <source>
    </source>
</evidence>
<evidence type="ECO:0000269" key="11">
    <source>
    </source>
</evidence>
<evidence type="ECO:0000269" key="12">
    <source>
    </source>
</evidence>
<evidence type="ECO:0000269" key="13">
    <source>
    </source>
</evidence>
<evidence type="ECO:0000269" key="14">
    <source>
    </source>
</evidence>
<evidence type="ECO:0000269" key="15">
    <source>
    </source>
</evidence>
<evidence type="ECO:0000269" key="16">
    <source>
    </source>
</evidence>
<evidence type="ECO:0000269" key="17">
    <source ref="1"/>
</evidence>
<evidence type="ECO:0000303" key="18">
    <source>
    </source>
</evidence>
<evidence type="ECO:0000305" key="19"/>
<evidence type="ECO:0007744" key="20">
    <source>
    </source>
</evidence>
<evidence type="ECO:0007744" key="21">
    <source>
    </source>
</evidence>
<keyword id="KW-0025">Alternative splicing</keyword>
<keyword id="KW-0130">Cell adhesion</keyword>
<keyword id="KW-0176">Collagen</keyword>
<keyword id="KW-0912">Congenital muscular dystrophy</keyword>
<keyword id="KW-0903">Direct protein sequencing</keyword>
<keyword id="KW-0225">Disease variant</keyword>
<keyword id="KW-0272">Extracellular matrix</keyword>
<keyword id="KW-0325">Glycoprotein</keyword>
<keyword id="KW-0379">Hydroxylation</keyword>
<keyword id="KW-0472">Membrane</keyword>
<keyword id="KW-0597">Phosphoprotein</keyword>
<keyword id="KW-1267">Proteomics identification</keyword>
<keyword id="KW-1185">Reference proteome</keyword>
<keyword id="KW-0677">Repeat</keyword>
<keyword id="KW-0964">Secreted</keyword>
<keyword id="KW-0732">Signal</keyword>
<accession>P12110</accession>
<accession>Q13909</accession>
<accession>Q13910</accession>
<accession>Q13911</accession>
<accession>Q14048</accession>
<accession>Q14049</accession>
<accession>Q16259</accession>
<accession>Q16597</accession>
<accession>Q6P0Q1</accession>
<accession>Q9UML3</accession>
<accession>Q9Y4S8</accession>
<reference key="1">
    <citation type="submission" date="2001-04" db="EMBL/GenBank/DDBJ databases">
        <authorList>
            <person name="Chu M.-L."/>
        </authorList>
    </citation>
    <scope>NUCLEOTIDE SEQUENCE [MRNA] (ISOFORM 2C2)</scope>
    <scope>SEQUENCE REVISION</scope>
    <scope>VARIANTS ASN-227; ASN-399 AND HIS-680</scope>
    <source>
        <tissue>Fibroblast</tissue>
        <tissue>Placenta</tissue>
    </source>
</reference>
<reference key="2">
    <citation type="journal article" date="2004" name="Genome Res.">
        <title>The status, quality, and expansion of the NIH full-length cDNA project: the Mammalian Gene Collection (MGC).</title>
        <authorList>
            <consortium name="The MGC Project Team"/>
        </authorList>
    </citation>
    <scope>NUCLEOTIDE SEQUENCE [LARGE SCALE MRNA] (ISOFORM 2C2)</scope>
    <scope>VARIANT ASN-399</scope>
    <source>
        <tissue>Ovary</tissue>
    </source>
</reference>
<reference key="3">
    <citation type="journal article" date="1992" name="J. Biol. Chem.">
        <title>Human alpha 2(VI) collagen gene. Heterogeneity at the 5'-untranslated region generated by an alternate exon.</title>
        <authorList>
            <person name="Saitta B."/>
            <person name="Timpl R."/>
            <person name="Chu M.-L."/>
        </authorList>
    </citation>
    <scope>NUCLEOTIDE SEQUENCE [GENOMIC DNA] OF 1-266</scope>
    <scope>ALTERNATIVE SPLICING</scope>
</reference>
<reference key="4">
    <citation type="journal article" date="1989" name="EMBO J.">
        <title>Sequence analysis of alpha 1(VI) and alpha 2(VI) chains of human type VI collagen reveals internal triplication of globular domains similar to the A domains of von Willebrand factor and two alpha 2(VI) chain variants that differ in the carboxy terminus.</title>
        <authorList>
            <person name="Chu M.-L."/>
            <person name="Pan T.-C."/>
            <person name="Conway D."/>
            <person name="Kuo H.J."/>
            <person name="Glanville R.W."/>
            <person name="Timpl R."/>
            <person name="Mann K."/>
            <person name="Deutzmann R."/>
        </authorList>
    </citation>
    <scope>NUCLEOTIDE SEQUENCE [MRNA] OF 1-255 AND 591-1019</scope>
    <scope>NUCLEOTIDE SEQUENCE [MRNA] OF 821-1019 (ISOFORM 2C2A)</scope>
    <source>
        <tissue>Fibroblast</tissue>
        <tissue>Placenta</tissue>
    </source>
</reference>
<reference key="5">
    <citation type="journal article" date="1994" name="Eur. J. Biochem.">
        <title>Recombinant expression and structural and binding properties of alpha 1(VI) and alpha 2(VI) chains of human collagen type VI.</title>
        <authorList>
            <person name="Tillet E."/>
            <person name="Wiedemann H."/>
            <person name="Golbik R."/>
            <person name="Pan T.-C."/>
            <person name="Zhang R.Z."/>
            <person name="Mann K."/>
            <person name="Chu M.-L."/>
            <person name="Timpl R."/>
        </authorList>
    </citation>
    <scope>PROTEIN SEQUENCE OF 179-185 AND 581-594</scope>
</reference>
<reference key="6">
    <citation type="journal article" date="1987" name="Eur. J. Biochem.">
        <title>Characterization of three constituent chains of collagen type VI by peptide sequences and cDNA clones.</title>
        <authorList>
            <person name="Chu M.-L."/>
            <person name="Mann K."/>
            <person name="Deutzmann R."/>
            <person name="Pribula-Conway D."/>
            <person name="Hsu-Chen C.-C."/>
            <person name="Bernard M.P."/>
            <person name="Timpl R."/>
        </authorList>
    </citation>
    <scope>NUCLEOTIDE SEQUENCE [MRNA] OF 238-299</scope>
</reference>
<reference key="7">
    <citation type="journal article" date="1991" name="Genomics">
        <title>The exon organization of the triple-helical coding regions of the human alpha 1(VI) and alpha 2(VI) collagen genes is highly similar.</title>
        <authorList>
            <person name="Saitta B."/>
            <person name="Wang Y.-M."/>
            <person name="Renkart L."/>
            <person name="Zhang R.-Z."/>
            <person name="Pan T.-C."/>
            <person name="Timpl R."/>
            <person name="Chu M.-L."/>
        </authorList>
    </citation>
    <scope>NUCLEOTIDE SEQUENCE [GENOMIC DNA] OF 246-590</scope>
    <scope>VARIANT ASN-399</scope>
</reference>
<reference key="8">
    <citation type="journal article" date="1983" name="Eur. J. Biochem.">
        <title>Further characterization of the three polypeptide chains of bovine and human short-chain collagen (intima collagen).</title>
        <authorList>
            <person name="Jander R."/>
            <person name="Rauterberg J."/>
            <person name="Glanville R.W."/>
        </authorList>
    </citation>
    <scope>PROTEIN SEQUENCE OF 251-264</scope>
</reference>
<reference key="9">
    <citation type="journal article" date="1988" name="J. Biol. Chem.">
        <title>Amino acid sequence of the triple-helical domain of human collagen type VI.</title>
        <authorList>
            <person name="Chu M.-L."/>
            <person name="Conway D."/>
            <person name="Pan T.-C."/>
            <person name="Baldwin C."/>
            <person name="Mann K."/>
            <person name="Deutzmann R."/>
            <person name="Timpl R."/>
        </authorList>
    </citation>
    <scope>NUCLEOTIDE SEQUENCE [MRNA] OF 256-590</scope>
</reference>
<reference key="10">
    <citation type="journal article" date="1988" name="Am. J. Hum. Genet.">
        <title>Cloning and chromosomal localization of human genes encoding the three chains of type VI collagen.</title>
        <authorList>
            <person name="Weil D."/>
            <person name="Mattei M.-G."/>
            <person name="Passage E."/>
            <person name="N'Guyen V.C."/>
            <person name="Pribula-Conway D."/>
            <person name="Mann K."/>
            <person name="Deutzmann R."/>
            <person name="Timpl R."/>
            <person name="Chu M.-L."/>
        </authorList>
    </citation>
    <scope>NUCLEOTIDE SEQUENCE [MRNA] OF 316-359</scope>
    <source>
        <tissue>Placenta</tissue>
    </source>
</reference>
<reference key="11">
    <citation type="journal article" date="1990" name="J. Biol. Chem.">
        <title>Alternative splicing of the human alpha 2(VI) collagen gene generates multiple mRNA transcripts which predict three protein variants with distinct carboxyl termini.</title>
        <authorList>
            <person name="Saitta B."/>
            <person name="Stokes D.G."/>
            <person name="Vissing H."/>
            <person name="Timpl R."/>
            <person name="Chu M.-L."/>
        </authorList>
    </citation>
    <scope>NUCLEOTIDE SEQUENCE [MRNA] OF 591-1019</scope>
    <scope>ALTERNATIVE SPLICING</scope>
    <scope>VARIANT HIS-680</scope>
</reference>
<reference key="12">
    <citation type="journal article" date="2007" name="BMC Genomics">
        <title>The full-ORF clone resource of the German cDNA consortium.</title>
        <authorList>
            <person name="Bechtel S."/>
            <person name="Rosenfelder H."/>
            <person name="Duda A."/>
            <person name="Schmidt C.P."/>
            <person name="Ernst U."/>
            <person name="Wellenreuther R."/>
            <person name="Mehrle A."/>
            <person name="Schuster C."/>
            <person name="Bahr A."/>
            <person name="Bloecker H."/>
            <person name="Heubner D."/>
            <person name="Hoerlein A."/>
            <person name="Michel G."/>
            <person name="Wedler H."/>
            <person name="Koehrer K."/>
            <person name="Ottenwaelder B."/>
            <person name="Poustka A."/>
            <person name="Wiemann S."/>
            <person name="Schupp I."/>
        </authorList>
    </citation>
    <scope>NUCLEOTIDE SEQUENCE [LARGE SCALE MRNA] OF 820-1019 (ISOFORM 2C2)</scope>
    <source>
        <tissue>Uterus</tissue>
    </source>
</reference>
<reference key="13">
    <citation type="journal article" date="1993" name="Mol. Biol. Cell">
        <title>Expression of NG2 proteoglycan causes retention of type VI collagen on the cell surface.</title>
        <authorList>
            <person name="Nishiyama A."/>
            <person name="Stallcup W.B."/>
        </authorList>
    </citation>
    <scope>SUBCELLULAR LOCATION</scope>
</reference>
<reference key="14">
    <citation type="journal article" date="1997" name="J. Biol. Chem.">
        <title>The membrane-spanning proteoglycan NG2 binds to collagens V and VI through the central nonglobular domain of its core protein.</title>
        <authorList>
            <person name="Tillet E."/>
            <person name="Ruggiero F."/>
            <person name="Nishiyama A."/>
            <person name="Stallcup W.B."/>
        </authorList>
    </citation>
    <scope>INTERACTION WITH CSPG4</scope>
</reference>
<reference key="15">
    <citation type="journal article" date="2009" name="J. Proteome Res.">
        <title>Glycoproteomics analysis of human liver tissue by combination of multiple enzyme digestion and hydrazide chemistry.</title>
        <authorList>
            <person name="Chen R."/>
            <person name="Jiang X."/>
            <person name="Sun D."/>
            <person name="Han G."/>
            <person name="Wang F."/>
            <person name="Ye M."/>
            <person name="Wang L."/>
            <person name="Zou H."/>
        </authorList>
    </citation>
    <scope>GLYCOSYLATION [LARGE SCALE ANALYSIS] AT ASN-140; ASN-785; ASN-897 AND ASN-954</scope>
    <source>
        <tissue>Liver</tissue>
    </source>
</reference>
<reference key="16">
    <citation type="journal article" date="2009" name="Sci. Signal.">
        <title>Quantitative phosphoproteomic analysis of T cell receptor signaling reveals system-wide modulation of protein-protein interactions.</title>
        <authorList>
            <person name="Mayya V."/>
            <person name="Lundgren D.H."/>
            <person name="Hwang S.-I."/>
            <person name="Rezaul K."/>
            <person name="Wu L."/>
            <person name="Eng J.K."/>
            <person name="Rodionov V."/>
            <person name="Han D.K."/>
        </authorList>
    </citation>
    <scope>PHOSPHORYLATION [LARGE SCALE ANALYSIS] AT THR-701</scope>
    <scope>IDENTIFICATION BY MASS SPECTROMETRY [LARGE SCALE ANALYSIS]</scope>
    <source>
        <tissue>Leukemic T-cell</tissue>
    </source>
</reference>
<reference key="17">
    <citation type="journal article" date="2012" name="J. Proteome Res.">
        <title>Resveratrol-induced changes of the human adipocyte secretion profile.</title>
        <authorList>
            <person name="Rosenow A."/>
            <person name="Noben J.P."/>
            <person name="Jocken J."/>
            <person name="Kallendrusch S."/>
            <person name="Fischer-Posovszky P."/>
            <person name="Mariman E.C."/>
            <person name="Renes J."/>
        </authorList>
    </citation>
    <scope>IDENTIFICATION BY MASS SPECTROMETRY [LARGE SCALE ANALYSIS]</scope>
</reference>
<reference key="18">
    <citation type="journal article" date="2014" name="J. Proteomics">
        <title>An enzyme assisted RP-RPLC approach for in-depth analysis of human liver phosphoproteome.</title>
        <authorList>
            <person name="Bian Y."/>
            <person name="Song C."/>
            <person name="Cheng K."/>
            <person name="Dong M."/>
            <person name="Wang F."/>
            <person name="Huang J."/>
            <person name="Sun D."/>
            <person name="Wang L."/>
            <person name="Ye M."/>
            <person name="Zou H."/>
        </authorList>
    </citation>
    <scope>PHOSPHORYLATION [LARGE SCALE ANALYSIS] AT SER-705</scope>
    <scope>IDENTIFICATION BY MASS SPECTROMETRY [LARGE SCALE ANALYSIS]</scope>
    <source>
        <tissue>Liver</tissue>
    </source>
</reference>
<reference key="19">
    <citation type="journal article" date="1996" name="Nat. Genet.">
        <title>Type VI collagen mutations in Bethlem myopathy, an autosomal dominant myopathy with contractures.</title>
        <authorList>
            <person name="Joebsis G.J."/>
            <person name="Keizers H."/>
            <person name="Vreijling J.P."/>
            <person name="de Visser M."/>
            <person name="Speer M.C."/>
            <person name="Wolterman R.A."/>
            <person name="Baas F."/>
            <person name="Bohlhuis P.A."/>
        </authorList>
    </citation>
    <scope>VARIANT BTHLM1B SER-271</scope>
</reference>
<reference key="20">
    <citation type="journal article" date="2002" name="Neurology">
        <title>Novel mutations in collagen VI genes: expansion of the Bethlem myopathy phenotype.</title>
        <authorList>
            <person name="Scacheri P.C."/>
            <person name="Gillanders E.M."/>
            <person name="Subramony S.H."/>
            <person name="Vedanarayanan V."/>
            <person name="Crowe C.A."/>
            <person name="Thakore N."/>
            <person name="Bingler M."/>
            <person name="Hoffman E.P."/>
        </authorList>
    </citation>
    <scope>VARIANT BTHLM1B ASN-621</scope>
</reference>
<reference key="21">
    <citation type="journal article" date="2005" name="Hum. Mol. Genet.">
        <title>Dominant collagen VI mutations are a common cause of Ullrich congenital muscular dystrophy.</title>
        <authorList>
            <person name="Baker N.L."/>
            <person name="Moergelin M."/>
            <person name="Peat R."/>
            <person name="Goemans N."/>
            <person name="North K.N."/>
            <person name="Bateman J.F."/>
            <person name="Lamande S.R."/>
        </authorList>
    </citation>
    <scope>VARIANTS UCMD1B PRO-837 AND ASN-897 DEL</scope>
    <scope>CHARACTERIZATION OF VARIANTS UCMD1B PRO-837 AND ASN-897 DEL</scope>
    <scope>VARIANTS ASN-227; ASN-399 AND HIS-680</scope>
</reference>
<reference key="22">
    <citation type="journal article" date="2005" name="J. Med. Genet.">
        <title>Automated genomic sequence analysis of the three collagen VI genes: applications to Ullrich congenital muscular dystrophy and Bethlem myopathy.</title>
        <authorList>
            <person name="Lampe A.K."/>
            <person name="Dunn D.M."/>
            <person name="von Niederhausern A.C."/>
            <person name="Hamil C."/>
            <person name="Aoyagi A."/>
            <person name="Laval S.H."/>
            <person name="Marie S.K."/>
            <person name="Chu M.-L."/>
            <person name="Swoboda K."/>
            <person name="Muntoni F."/>
            <person name="Bonnemann C.G."/>
            <person name="Flanigan K.M."/>
            <person name="Bushby K.M.D."/>
            <person name="Weiss R.B."/>
        </authorList>
    </citation>
    <scope>VARIANTS BTHLM1B SER-700 AND ARG-777</scope>
    <scope>VARIANTS UCMD1B ARG-283; HIS-498; ARG-531; ARG-777 AND SER-876</scope>
    <scope>VARIANTS LYS-106; ASN-227; ASN-399; GLN-489; SER-518; HIS-680; CYS-724; HIS-784; GLY-804; GLN-853 AND ARG-935</scope>
</reference>
<reference key="23">
    <citation type="journal article" date="2007" name="Ann. Neurol.">
        <title>Molecular consequences of dominant Bethlem myopathy collagen VI mutations.</title>
        <authorList>
            <person name="Baker N.L."/>
            <person name="Moergelin M."/>
            <person name="Pace R.A."/>
            <person name="Peat R.A."/>
            <person name="Adams N.E."/>
            <person name="Gardner R.J."/>
            <person name="Rowland L.P."/>
            <person name="Miller G."/>
            <person name="De Jonghe P."/>
            <person name="Ceulemans B."/>
            <person name="Hannibal M.C."/>
            <person name="Edwards M."/>
            <person name="Thompson E.M."/>
            <person name="Jacobson R."/>
            <person name="Quinlivan R.C.M."/>
            <person name="Aftimos S."/>
            <person name="Kornberg A.J."/>
            <person name="North K.N."/>
            <person name="Bateman J.F."/>
            <person name="Lamande S.R."/>
        </authorList>
    </citation>
    <scope>VARIANT BTHLM1B LEU-932</scope>
    <scope>VARIANTS ASN-227; ASN-399; HIS-680 AND ARG-895</scope>
</reference>
<reference key="24">
    <citation type="journal article" date="2008" name="Neurology">
        <title>Autosomal recessive myosclerosis myopathy is a collagen VI disorder.</title>
        <authorList>
            <person name="Merlini L."/>
            <person name="Martoni E."/>
            <person name="Grumati P."/>
            <person name="Sabatelli P."/>
            <person name="Squarzoni S."/>
            <person name="Urciuolo A."/>
            <person name="Ferlini A."/>
            <person name="Gualandi F."/>
            <person name="Bonaldo P."/>
        </authorList>
    </citation>
    <scope>INVOLVEMENT IN MYOSCLEROSIS</scope>
</reference>
<reference key="25">
    <citation type="journal article" date="2012" name="Am. J. Hum. Genet.">
        <title>An excess of deleterious variants in VEGF-A pathway genes in Down-syndrome-associated atrioventricular septal defects.</title>
        <authorList>
            <person name="Ackerman C."/>
            <person name="Locke A.E."/>
            <person name="Feingold E."/>
            <person name="Reshey B."/>
            <person name="Espana K."/>
            <person name="Thusberg J."/>
            <person name="Mooney S."/>
            <person name="Bean L.J."/>
            <person name="Dooley K.J."/>
            <person name="Cua C.L."/>
            <person name="Reeves R.H."/>
            <person name="Sherman S.L."/>
            <person name="Maslen C.L."/>
        </authorList>
    </citation>
    <scope>VARIANTS LYS-106; CYS-377; ASN-446; MET-728; GLN-843; GLN-853 AND CYS-1010</scope>
</reference>
<reference key="26">
    <citation type="journal article" date="2016" name="Nature">
        <title>Analysis of protein-coding genetic variation in 60,706 humans.</title>
        <authorList>
            <consortium name="Exome Aggregation Consortium"/>
            <person name="Lek M."/>
            <person name="Karczewski K.J."/>
            <person name="Minikel E.V."/>
            <person name="Samocha K.E."/>
            <person name="Banks E."/>
            <person name="Fennell T."/>
            <person name="O'Donnell-Luria A.H."/>
            <person name="Ware J.S."/>
            <person name="Hill A.J."/>
            <person name="Cummings B.B."/>
            <person name="Tukiainen T."/>
            <person name="Birnbaum D.P."/>
            <person name="Kosmicki J.A."/>
            <person name="Duncan L.E."/>
            <person name="Estrada K."/>
            <person name="Zhao F."/>
            <person name="Zou J."/>
            <person name="Pierce-Hoffman E."/>
            <person name="Berghout J."/>
            <person name="Cooper D.N."/>
            <person name="Deflaux N."/>
            <person name="DePristo M."/>
            <person name="Do R."/>
            <person name="Flannick J."/>
            <person name="Fromer M."/>
            <person name="Gauthier L."/>
            <person name="Goldstein J."/>
            <person name="Gupta N."/>
            <person name="Howrigan D."/>
            <person name="Kiezun A."/>
            <person name="Kurki M.I."/>
            <person name="Moonshine A.L."/>
            <person name="Natarajan P."/>
            <person name="Orozco L."/>
            <person name="Peloso G.M."/>
            <person name="Poplin R."/>
            <person name="Rivas M.A."/>
            <person name="Ruano-Rubio V."/>
            <person name="Rose S.A."/>
            <person name="Ruderfer D.M."/>
            <person name="Shakir K."/>
            <person name="Stenson P.D."/>
            <person name="Stevens C."/>
            <person name="Thomas B.P."/>
            <person name="Tiao G."/>
            <person name="Tusie-Luna M.T."/>
            <person name="Weisburd B."/>
            <person name="Won H.H."/>
            <person name="Yu D."/>
            <person name="Altshuler D.M."/>
            <person name="Ardissino D."/>
            <person name="Boehnke M."/>
            <person name="Danesh J."/>
            <person name="Donnelly S."/>
            <person name="Elosua R."/>
            <person name="Florez J.C."/>
            <person name="Gabriel S.B."/>
            <person name="Getz G."/>
            <person name="Glatt S.J."/>
            <person name="Hultman C.M."/>
            <person name="Kathiresan S."/>
            <person name="Laakso M."/>
            <person name="McCarroll S."/>
            <person name="McCarthy M.I."/>
            <person name="McGovern D."/>
            <person name="McPherson R."/>
            <person name="Neale B.M."/>
            <person name="Palotie A."/>
            <person name="Purcell S.M."/>
            <person name="Saleheen D."/>
            <person name="Scharf J.M."/>
            <person name="Sklar P."/>
            <person name="Sullivan P.F."/>
            <person name="Tuomilehto J."/>
            <person name="Tsuang M.T."/>
            <person name="Watkins H.C."/>
            <person name="Wilson J.G."/>
            <person name="Daly M.J."/>
            <person name="MacArthur D.G."/>
        </authorList>
    </citation>
    <scope>VARIANT GLN-853</scope>
</reference>
<comment type="function">
    <text>Collagen VI acts as a cell-binding protein.</text>
</comment>
<comment type="subunit">
    <text evidence="16">Trimers composed of three different chains: alpha-1(VI), alpha-2(VI), and alpha-3(VI) or alpha-5(VI) or alpha-6(VI). Interacts with CSPG4.</text>
</comment>
<comment type="interaction">
    <interactant intactId="EBI-928749">
        <id>P12110</id>
    </interactant>
    <interactant intactId="EBI-529989">
        <id>Q9NRI5</id>
        <label>DISC1</label>
    </interactant>
    <organismsDiffer>false</organismsDiffer>
    <experiments>3</experiments>
</comment>
<comment type="subcellular location">
    <subcellularLocation>
        <location evidence="14">Secreted</location>
        <location evidence="14">Extracellular space</location>
        <location evidence="14">Extracellular matrix</location>
    </subcellularLocation>
    <subcellularLocation>
        <location evidence="14">Membrane</location>
        <topology evidence="14">Peripheral membrane protein</topology>
    </subcellularLocation>
    <text>Recruited on membranes by CSPG4.</text>
</comment>
<comment type="alternative products">
    <event type="alternative splicing"/>
    <isoform>
        <id>P12110-1</id>
        <name>2C2</name>
        <sequence type="displayed"/>
    </isoform>
    <isoform>
        <id>P12110-2</id>
        <name>2C2A</name>
        <sequence type="described" ref="VSP_001163 VSP_001164"/>
    </isoform>
    <isoform>
        <id>P12110-3</id>
        <name>2C2A'</name>
        <sequence type="described" ref="VSP_001161 VSP_001162"/>
    </isoform>
</comment>
<comment type="PTM">
    <text>Prolines at the third position of the tripeptide repeating unit (G-X-Y) are hydroxylated in some or all of the chains.</text>
</comment>
<comment type="disease" evidence="4 7 10 15">
    <disease id="DI-06833">
        <name>Bethlem myopathy 1B</name>
        <acronym>BTHLM1B</acronym>
        <description>A form of Bethlem myopathy, a slowly progressive muscular dystrophy characterized by joint contractures, most frequently affecting the elbows and ankles, and muscle weakness and wasting involving the proximal and extensor muscles more than the distal and flexor ones. The clinical onset more often occurs in childhood or adulthood, but it can be prenatal with decreased fetal movements or neonatal with hypotonia. The hallmark of Bethlem myopathy is long finger flexion contractures. Inheritance can be autosomal dominant or autosomal recessive.</description>
        <dbReference type="MIM" id="620725"/>
    </disease>
    <text>The disease is caused by variants affecting the gene represented in this entry.</text>
</comment>
<comment type="disease" evidence="6 7">
    <disease id="DI-06835">
        <name>Ullrich congenital muscular dystrophy 1B</name>
        <acronym>UCMD1B</acronym>
        <description>A form of Ullrich congenital muscular dystrophy, a disease characterized by generalized muscle weakness and striking hypermobility of distal joints in conjunction with variable contractures of more proximal joints and normal intelligence. Additional findings may include kyphoscoliosis, protruded calcanei, and follicular hyperkeratosis (rough skin). More severely affected patients manifest at birth and never achieve independent ambulation, while patients with milder phenotypes might maintain ambulation into adulthood. Inheritance can be autosomal dominant or autosomal recessive.</description>
        <dbReference type="MIM" id="620727"/>
    </disease>
    <text>The disease is caused by variants affecting the gene represented in this entry.</text>
</comment>
<comment type="disease">
    <disease id="DI-01246">
        <name>Myosclerosis autosomal recessive</name>
        <acronym>MYOSAR</acronym>
        <description>A condition characterized by chronic inflammation of skeletal muscle with hyperplasia of the interstitial connective tissue. The clinical picture includes slender muscles with firm 'woody' consistency and restriction of movement of many joints because of muscle contractures.</description>
        <dbReference type="MIM" id="255600"/>
    </disease>
    <text>The disease is caused by variants affecting the gene represented in this entry.</text>
</comment>
<comment type="similarity">
    <text evidence="19">Belongs to the type VI collagen family.</text>
</comment>
<protein>
    <recommendedName>
        <fullName>Collagen alpha-2(VI) chain</fullName>
    </recommendedName>
</protein>
<name>CO6A2_HUMAN</name>
<feature type="signal peptide" evidence="1">
    <location>
        <begin position="1"/>
        <end position="20"/>
    </location>
</feature>
<feature type="chain" id="PRO_0000005832" description="Collagen alpha-2(VI) chain">
    <location>
        <begin position="21"/>
        <end position="1019"/>
    </location>
</feature>
<feature type="domain" description="VWFA 1" evidence="2">
    <location>
        <begin position="46"/>
        <end position="234"/>
    </location>
</feature>
<feature type="domain" description="VWFA 2" evidence="2">
    <location>
        <begin position="615"/>
        <end position="805"/>
    </location>
</feature>
<feature type="domain" description="VWFA 3" evidence="2">
    <location>
        <begin position="833"/>
        <end position="1014"/>
    </location>
</feature>
<feature type="region of interest" description="Nonhelical region">
    <location>
        <begin position="21"/>
        <end position="256"/>
    </location>
</feature>
<feature type="region of interest" description="Triple-helical region">
    <location>
        <begin position="257"/>
        <end position="590"/>
    </location>
</feature>
<feature type="region of interest" description="Disordered" evidence="3">
    <location>
        <begin position="257"/>
        <end position="588"/>
    </location>
</feature>
<feature type="region of interest" description="Nonhelical region">
    <location>
        <begin position="591"/>
        <end position="1019"/>
    </location>
</feature>
<feature type="short sequence motif" description="Cell attachment site" evidence="1">
    <location>
        <begin position="366"/>
        <end position="368"/>
    </location>
</feature>
<feature type="short sequence motif" description="Cell attachment site" evidence="1">
    <location>
        <begin position="426"/>
        <end position="428"/>
    </location>
</feature>
<feature type="short sequence motif" description="Cell attachment site" evidence="1">
    <location>
        <begin position="489"/>
        <end position="491"/>
    </location>
</feature>
<feature type="short sequence motif" description="Cell attachment site" evidence="1">
    <location>
        <begin position="498"/>
        <end position="500"/>
    </location>
</feature>
<feature type="short sequence motif" description="Cell attachment site" evidence="1">
    <location>
        <begin position="539"/>
        <end position="541"/>
    </location>
</feature>
<feature type="compositionally biased region" description="Low complexity" evidence="3">
    <location>
        <begin position="287"/>
        <end position="305"/>
    </location>
</feature>
<feature type="compositionally biased region" description="Basic and acidic residues" evidence="3">
    <location>
        <begin position="306"/>
        <end position="318"/>
    </location>
</feature>
<feature type="compositionally biased region" description="Basic and acidic residues" evidence="3">
    <location>
        <begin position="365"/>
        <end position="377"/>
    </location>
</feature>
<feature type="compositionally biased region" description="Basic and acidic residues" evidence="3">
    <location>
        <begin position="419"/>
        <end position="429"/>
    </location>
</feature>
<feature type="compositionally biased region" description="Basic and acidic residues" evidence="3">
    <location>
        <begin position="524"/>
        <end position="557"/>
    </location>
</feature>
<feature type="compositionally biased region" description="Pro residues" evidence="3">
    <location>
        <begin position="559"/>
        <end position="569"/>
    </location>
</feature>
<feature type="modified residue" description="Phosphothreonine" evidence="20">
    <location>
        <position position="701"/>
    </location>
</feature>
<feature type="modified residue" description="Phosphoserine" evidence="21">
    <location>
        <position position="705"/>
    </location>
</feature>
<feature type="glycosylation site" description="N-linked (GlcNAc...) asparagine" evidence="11">
    <location>
        <position position="140"/>
    </location>
</feature>
<feature type="glycosylation site" description="N-linked (GlcNAc...) asparagine" evidence="1">
    <location>
        <position position="327"/>
    </location>
</feature>
<feature type="glycosylation site" description="N-linked (GlcNAc...) asparagine" evidence="1">
    <location>
        <position position="630"/>
    </location>
</feature>
<feature type="glycosylation site" description="N-linked (GlcNAc...) asparagine" evidence="11">
    <location>
        <position position="785"/>
    </location>
</feature>
<feature type="glycosylation site" description="N-linked (GlcNAc...) asparagine" evidence="11">
    <location>
        <position position="897"/>
    </location>
</feature>
<feature type="glycosylation site" description="N-linked (GlcNAc...) asparagine" evidence="11">
    <location>
        <position position="954"/>
    </location>
</feature>
<feature type="splice variant" id="VSP_001163" description="In isoform 2C2A." evidence="18">
    <original>ELSVAQCTQRPVDIVFLLDGSERLGEQNFHKARRFVEQVARRLTLARRDDDPLNARVALLQFGGPGEQQVAFPLSHNLTAIHEALETTQYLNSFSHVGAGVVHAINAIVRSPRGGARRHAELSFVFLTDGVTGNDSLHESAHSMRKQNVVPTVLALGSDVDMDVLTTLSLG</original>
    <variation>DAPWPGGEPPVTFLRTEEGPDATFPRTIPLIQQLLNATELTQDPAAYSQLVAVLVYTAERAKFATGVERQDWMELFIDTFKLVHRDIVGDPETALALC</variation>
    <location>
        <begin position="821"/>
        <end position="991"/>
    </location>
</feature>
<feature type="splice variant" id="VSP_001161" description="In isoform 2C2A'." evidence="19">
    <original>ELSVAQCT</original>
    <variation>GLDGAVLC</variation>
    <location>
        <begin position="821"/>
        <end position="828"/>
    </location>
</feature>
<feature type="splice variant" id="VSP_001162" description="In isoform 2C2A'." evidence="19">
    <location>
        <begin position="829"/>
        <end position="1019"/>
    </location>
</feature>
<feature type="splice variant" id="VSP_001164" description="In isoform 2C2A." evidence="18">
    <location>
        <begin position="992"/>
        <end position="1019"/>
    </location>
</feature>
<feature type="sequence variant" id="VAR_058225" description="In dbSNP:rs141703710." evidence="7 12">
    <original>E</original>
    <variation>K</variation>
    <location>
        <position position="106"/>
    </location>
</feature>
<feature type="sequence variant" id="VAR_048801" description="In dbSNP:rs35881321." evidence="6 7 10 17">
    <original>D</original>
    <variation>N</variation>
    <location>
        <position position="227"/>
    </location>
</feature>
<feature type="sequence variant" id="VAR_013589" description="In BTHLM1B; dbSNP:rs121912940." evidence="15">
    <original>G</original>
    <variation>S</variation>
    <location>
        <position position="271"/>
    </location>
</feature>
<feature type="sequence variant" id="VAR_058226" description="In UCMD1B; dbSNP:rs267606748." evidence="7">
    <original>G</original>
    <variation>R</variation>
    <location>
        <position position="283"/>
    </location>
</feature>
<feature type="sequence variant" id="VAR_076959" description="In dbSNP:rs144801620." evidence="12">
    <original>R</original>
    <variation>C</variation>
    <location>
        <position position="377"/>
    </location>
</feature>
<feature type="sequence variant" id="VAR_030315" description="In dbSNP:rs2839110." evidence="5 6 7 9 10 17">
    <original>S</original>
    <variation>N</variation>
    <location>
        <position position="399"/>
    </location>
</feature>
<feature type="sequence variant" id="VAR_076960" description="In dbSNP:rs535007570." evidence="12">
    <original>D</original>
    <variation>N</variation>
    <location>
        <position position="446"/>
    </location>
</feature>
<feature type="sequence variant" id="VAR_058227" description="In dbSNP:rs61735828." evidence="7">
    <original>R</original>
    <variation>Q</variation>
    <location>
        <position position="489"/>
    </location>
</feature>
<feature type="sequence variant" id="VAR_058228" description="In UCMD1B; dbSNP:rs267606749." evidence="7">
    <original>R</original>
    <variation>H</variation>
    <location>
        <position position="498"/>
    </location>
</feature>
<feature type="sequence variant" id="VAR_058229" description="In dbSNP:rs141166141." evidence="7">
    <original>P</original>
    <variation>S</variation>
    <location>
        <position position="518"/>
    </location>
</feature>
<feature type="sequence variant" id="VAR_058230" description="In UCMD1B." evidence="7">
    <original>G</original>
    <variation>R</variation>
    <location>
        <position position="531"/>
    </location>
</feature>
<feature type="sequence variant" id="VAR_013590" description="In BTHLM1B; dbSNP:rs267606750." evidence="4">
    <original>D</original>
    <variation>N</variation>
    <location>
        <position position="621"/>
    </location>
</feature>
<feature type="sequence variant" id="VAR_030316" description="In dbSNP:rs1042917." evidence="6 7 8 10 17">
    <original>R</original>
    <variation>H</variation>
    <location>
        <position position="680"/>
    </location>
</feature>
<feature type="sequence variant" id="VAR_058231" description="In BTHLM1B; dbSNP:rs794727418." evidence="7">
    <original>G</original>
    <variation>S</variation>
    <location>
        <position position="700"/>
    </location>
</feature>
<feature type="sequence variant" id="VAR_058232" description="In dbSNP:rs150098077." evidence="7">
    <original>R</original>
    <variation>C</variation>
    <location>
        <position position="724"/>
    </location>
</feature>
<feature type="sequence variant" id="VAR_076961" description="In dbSNP:rs200585528." evidence="12">
    <original>V</original>
    <variation>M</variation>
    <location>
        <position position="728"/>
    </location>
</feature>
<feature type="sequence variant" id="VAR_058233" description="In BTHLM1B; dbSNP:rs267606747." evidence="7">
    <original>C</original>
    <variation>R</variation>
    <location>
        <position position="777"/>
    </location>
</feature>
<feature type="sequence variant" id="VAR_058234" description="In dbSNP:rs75120695." evidence="7">
    <original>R</original>
    <variation>H</variation>
    <location>
        <position position="784"/>
    </location>
</feature>
<feature type="sequence variant" id="VAR_058235" description="In dbSNP:rs779847082." evidence="7">
    <original>V</original>
    <variation>G</variation>
    <location>
        <position position="804"/>
    </location>
</feature>
<feature type="sequence variant" id="VAR_058236" description="In UCMD1B; prevents collagen VI assembly; dbSNP:rs1255514828." evidence="6">
    <original>L</original>
    <variation>P</variation>
    <location>
        <position position="837"/>
    </location>
</feature>
<feature type="sequence variant" id="VAR_076962" description="In dbSNP:rs201736323." evidence="12">
    <original>R</original>
    <variation>Q</variation>
    <location>
        <position position="843"/>
    </location>
</feature>
<feature type="sequence variant" id="VAR_058237" description="In dbSNP:rs144830948." evidence="7 12 13">
    <original>R</original>
    <variation>Q</variation>
    <location>
        <position position="853"/>
    </location>
</feature>
<feature type="sequence variant" id="VAR_058238" description="In UCMD1B; dbSNP:rs387906608." evidence="7">
    <original>R</original>
    <variation>S</variation>
    <location>
        <position position="876"/>
    </location>
</feature>
<feature type="sequence variant" id="VAR_058239" description="In dbSNP:rs141233891." evidence="10">
    <original>S</original>
    <variation>R</variation>
    <location>
        <position position="895"/>
    </location>
</feature>
<feature type="sequence variant" id="VAR_058240" description="In UCMD1B; results in severe collagen VI matrix deficiencies; dbSNP:rs2078769555." evidence="6">
    <location>
        <position position="897"/>
    </location>
</feature>
<feature type="sequence variant" id="VAR_058241" description="In BTHLM1B; results in reduced intracellular collagen VI assembly and secretion; dbSNP:rs117725825." evidence="10">
    <original>P</original>
    <variation>L</variation>
    <location>
        <position position="932"/>
    </location>
</feature>
<feature type="sequence variant" id="VAR_048802" description="In dbSNP:rs35548026." evidence="7">
    <original>G</original>
    <variation>R</variation>
    <location>
        <position position="935"/>
    </location>
</feature>
<feature type="sequence variant" id="VAR_076963" description="In dbSNP:rs1051148162." evidence="12">
    <original>F</original>
    <variation>C</variation>
    <location>
        <position position="1010"/>
    </location>
</feature>
<feature type="sequence variant" id="VAR_048803" description="In dbSNP:rs11910483.">
    <original>I</original>
    <variation>L</variation>
    <location>
        <position position="1015"/>
    </location>
</feature>
<feature type="sequence conflict" description="In Ref. 7; AAB20836." evidence="19" ref="7">
    <original>K</original>
    <variation>S</variation>
    <location>
        <position position="507"/>
    </location>
</feature>
<feature type="sequence conflict" description="In Ref. 1; AAA52056 and 11; AAA35620." evidence="19" ref="1 11">
    <original>KQ</original>
    <variation>NE</variation>
    <location>
        <begin position="966"/>
        <end position="967"/>
    </location>
</feature>
<dbReference type="EMBL" id="AY029208">
    <property type="protein sequence ID" value="AAA52056.2"/>
    <property type="molecule type" value="mRNA"/>
</dbReference>
<dbReference type="EMBL" id="BC065509">
    <property type="protein sequence ID" value="AAH65509.1"/>
    <property type="molecule type" value="mRNA"/>
</dbReference>
<dbReference type="EMBL" id="M81835">
    <property type="status" value="NOT_ANNOTATED_CDS"/>
    <property type="molecule type" value="Genomic_DNA"/>
</dbReference>
<dbReference type="EMBL" id="X15977">
    <property type="protein sequence ID" value="CAA34099.1"/>
    <property type="molecule type" value="mRNA"/>
</dbReference>
<dbReference type="EMBL" id="X06195">
    <property type="protein sequence ID" value="CAA29556.1"/>
    <property type="molecule type" value="mRNA"/>
</dbReference>
<dbReference type="EMBL" id="S75462">
    <property type="protein sequence ID" value="AAB20836.1"/>
    <property type="molecule type" value="Genomic_DNA"/>
</dbReference>
<dbReference type="EMBL" id="S75425">
    <property type="protein sequence ID" value="AAB20836.1"/>
    <property type="status" value="JOINED"/>
    <property type="molecule type" value="Genomic_DNA"/>
</dbReference>
<dbReference type="EMBL" id="S75428">
    <property type="protein sequence ID" value="AAB20836.1"/>
    <property type="status" value="JOINED"/>
    <property type="molecule type" value="Genomic_DNA"/>
</dbReference>
<dbReference type="EMBL" id="S75430">
    <property type="protein sequence ID" value="AAB20836.1"/>
    <property type="status" value="JOINED"/>
    <property type="molecule type" value="Genomic_DNA"/>
</dbReference>
<dbReference type="EMBL" id="S75432">
    <property type="protein sequence ID" value="AAB20836.1"/>
    <property type="status" value="JOINED"/>
    <property type="molecule type" value="Genomic_DNA"/>
</dbReference>
<dbReference type="EMBL" id="S75434">
    <property type="protein sequence ID" value="AAB20836.1"/>
    <property type="status" value="JOINED"/>
    <property type="molecule type" value="Genomic_DNA"/>
</dbReference>
<dbReference type="EMBL" id="S75436">
    <property type="protein sequence ID" value="AAB20836.1"/>
    <property type="status" value="JOINED"/>
    <property type="molecule type" value="Genomic_DNA"/>
</dbReference>
<dbReference type="EMBL" id="S75438">
    <property type="protein sequence ID" value="AAB20836.1"/>
    <property type="status" value="JOINED"/>
    <property type="molecule type" value="Genomic_DNA"/>
</dbReference>
<dbReference type="EMBL" id="S75440">
    <property type="protein sequence ID" value="AAB20836.1"/>
    <property type="status" value="JOINED"/>
    <property type="molecule type" value="Genomic_DNA"/>
</dbReference>
<dbReference type="EMBL" id="S75442">
    <property type="protein sequence ID" value="AAB20836.1"/>
    <property type="status" value="JOINED"/>
    <property type="molecule type" value="Genomic_DNA"/>
</dbReference>
<dbReference type="EMBL" id="S75444">
    <property type="protein sequence ID" value="AAB20836.1"/>
    <property type="status" value="JOINED"/>
    <property type="molecule type" value="Genomic_DNA"/>
</dbReference>
<dbReference type="EMBL" id="S75446">
    <property type="protein sequence ID" value="AAB20836.1"/>
    <property type="status" value="JOINED"/>
    <property type="molecule type" value="Genomic_DNA"/>
</dbReference>
<dbReference type="EMBL" id="S75448">
    <property type="protein sequence ID" value="AAB20836.1"/>
    <property type="status" value="JOINED"/>
    <property type="molecule type" value="Genomic_DNA"/>
</dbReference>
<dbReference type="EMBL" id="S75450">
    <property type="protein sequence ID" value="AAB20836.1"/>
    <property type="status" value="JOINED"/>
    <property type="molecule type" value="Genomic_DNA"/>
</dbReference>
<dbReference type="EMBL" id="S75452">
    <property type="protein sequence ID" value="AAB20836.1"/>
    <property type="status" value="JOINED"/>
    <property type="molecule type" value="Genomic_DNA"/>
</dbReference>
<dbReference type="EMBL" id="S75454">
    <property type="protein sequence ID" value="AAB20836.1"/>
    <property type="status" value="JOINED"/>
    <property type="molecule type" value="Genomic_DNA"/>
</dbReference>
<dbReference type="EMBL" id="S75456">
    <property type="protein sequence ID" value="AAB20836.1"/>
    <property type="status" value="JOINED"/>
    <property type="molecule type" value="Genomic_DNA"/>
</dbReference>
<dbReference type="EMBL" id="S75458">
    <property type="protein sequence ID" value="AAB20836.1"/>
    <property type="status" value="JOINED"/>
    <property type="molecule type" value="Genomic_DNA"/>
</dbReference>
<dbReference type="EMBL" id="S75460">
    <property type="protein sequence ID" value="AAB20836.1"/>
    <property type="status" value="JOINED"/>
    <property type="molecule type" value="Genomic_DNA"/>
</dbReference>
<dbReference type="EMBL" id="M34572">
    <property type="protein sequence ID" value="AAA35618.1"/>
    <property type="molecule type" value="mRNA"/>
</dbReference>
<dbReference type="EMBL" id="M34571">
    <property type="protein sequence ID" value="AAA35618.1"/>
    <property type="status" value="JOINED"/>
    <property type="molecule type" value="mRNA"/>
</dbReference>
<dbReference type="EMBL" id="M34572">
    <property type="protein sequence ID" value="AAA35619.1"/>
    <property type="molecule type" value="mRNA"/>
</dbReference>
<dbReference type="EMBL" id="M34571">
    <property type="protein sequence ID" value="AAA35619.1"/>
    <property type="status" value="JOINED"/>
    <property type="molecule type" value="mRNA"/>
</dbReference>
<dbReference type="EMBL" id="M34573">
    <property type="protein sequence ID" value="AAA35620.1"/>
    <property type="molecule type" value="mRNA"/>
</dbReference>
<dbReference type="EMBL" id="M34571">
    <property type="protein sequence ID" value="AAA35620.1"/>
    <property type="status" value="JOINED"/>
    <property type="molecule type" value="mRNA"/>
</dbReference>
<dbReference type="EMBL" id="M34570">
    <property type="protein sequence ID" value="AAA35621.1"/>
    <property type="molecule type" value="mRNA"/>
</dbReference>
<dbReference type="EMBL" id="AL096746">
    <property type="protein sequence ID" value="CAB46421.2"/>
    <property type="molecule type" value="mRNA"/>
</dbReference>
<dbReference type="CCDS" id="CCDS13728.1">
    <molecule id="P12110-1"/>
</dbReference>
<dbReference type="CCDS" id="CCDS13729.1">
    <molecule id="P12110-2"/>
</dbReference>
<dbReference type="CCDS" id="CCDS13730.1">
    <molecule id="P12110-3"/>
</dbReference>
<dbReference type="PIR" id="S05378">
    <property type="entry name" value="CGHU2A"/>
</dbReference>
<dbReference type="PIR" id="S09646">
    <property type="entry name" value="S09646"/>
</dbReference>
<dbReference type="PIR" id="T12549">
    <property type="entry name" value="T12549"/>
</dbReference>
<dbReference type="RefSeq" id="NP_001840.3">
    <molecule id="P12110-1"/>
    <property type="nucleotide sequence ID" value="NM_001849.3"/>
</dbReference>
<dbReference type="RefSeq" id="NP_478054.2">
    <molecule id="P12110-2"/>
    <property type="nucleotide sequence ID" value="NM_058174.3"/>
</dbReference>
<dbReference type="RefSeq" id="NP_478055.2">
    <molecule id="P12110-3"/>
    <property type="nucleotide sequence ID" value="NM_058175.3"/>
</dbReference>
<dbReference type="RefSeq" id="XP_011527753.1">
    <property type="nucleotide sequence ID" value="XM_011529451.1"/>
</dbReference>
<dbReference type="EMDB" id="EMD-18689"/>
<dbReference type="SMR" id="P12110"/>
<dbReference type="BioGRID" id="107689">
    <property type="interactions" value="131"/>
</dbReference>
<dbReference type="ComplexPortal" id="CPX-1736">
    <property type="entry name" value="Collagen type VI trimer"/>
</dbReference>
<dbReference type="FunCoup" id="P12110">
    <property type="interactions" value="655"/>
</dbReference>
<dbReference type="IntAct" id="P12110">
    <property type="interactions" value="81"/>
</dbReference>
<dbReference type="MINT" id="P12110"/>
<dbReference type="STRING" id="9606.ENSP00000300527"/>
<dbReference type="ChEMBL" id="CHEMBL2364188"/>
<dbReference type="GlyConnect" id="1137">
    <property type="glycosylation" value="52 N-Linked glycans (4 sites)"/>
</dbReference>
<dbReference type="GlyCosmos" id="P12110">
    <property type="glycosylation" value="9 sites, 67 glycans"/>
</dbReference>
<dbReference type="GlyGen" id="P12110">
    <property type="glycosylation" value="9 sites, 112 N-linked glycans (5 sites), 2 O-linked glycans (3 sites)"/>
</dbReference>
<dbReference type="iPTMnet" id="P12110"/>
<dbReference type="PhosphoSitePlus" id="P12110"/>
<dbReference type="SwissPalm" id="P12110"/>
<dbReference type="BioMuta" id="COL6A2"/>
<dbReference type="DMDM" id="125987812"/>
<dbReference type="REPRODUCTION-2DPAGE" id="P12110"/>
<dbReference type="jPOST" id="P12110"/>
<dbReference type="MassIVE" id="P12110"/>
<dbReference type="PaxDb" id="9606-ENSP00000300527"/>
<dbReference type="PeptideAtlas" id="P12110"/>
<dbReference type="ProteomicsDB" id="52830">
    <molecule id="P12110-1"/>
</dbReference>
<dbReference type="ProteomicsDB" id="52831">
    <molecule id="P12110-2"/>
</dbReference>
<dbReference type="ProteomicsDB" id="52832">
    <molecule id="P12110-3"/>
</dbReference>
<dbReference type="Pumba" id="P12110"/>
<dbReference type="TopDownProteomics" id="P12110-3">
    <molecule id="P12110-3"/>
</dbReference>
<dbReference type="Antibodypedia" id="1646">
    <property type="antibodies" value="246 antibodies from 31 providers"/>
</dbReference>
<dbReference type="DNASU" id="1292"/>
<dbReference type="Ensembl" id="ENST00000300527.9">
    <molecule id="P12110-1"/>
    <property type="protein sequence ID" value="ENSP00000300527.4"/>
    <property type="gene ID" value="ENSG00000142173.17"/>
</dbReference>
<dbReference type="Ensembl" id="ENST00000397763.6">
    <molecule id="P12110-2"/>
    <property type="protein sequence ID" value="ENSP00000380870.1"/>
    <property type="gene ID" value="ENSG00000142173.17"/>
</dbReference>
<dbReference type="Ensembl" id="ENST00000409416.6">
    <molecule id="P12110-3"/>
    <property type="protein sequence ID" value="ENSP00000387115.1"/>
    <property type="gene ID" value="ENSG00000142173.17"/>
</dbReference>
<dbReference type="GeneID" id="1292"/>
<dbReference type="KEGG" id="hsa:1292"/>
<dbReference type="MANE-Select" id="ENST00000300527.9">
    <property type="protein sequence ID" value="ENSP00000300527.4"/>
    <property type="RefSeq nucleotide sequence ID" value="NM_001849.4"/>
    <property type="RefSeq protein sequence ID" value="NP_001840.3"/>
</dbReference>
<dbReference type="UCSC" id="uc002zhy.1">
    <molecule id="P12110-1"/>
    <property type="organism name" value="human"/>
</dbReference>
<dbReference type="AGR" id="HGNC:2212"/>
<dbReference type="CTD" id="1292"/>
<dbReference type="DisGeNET" id="1292"/>
<dbReference type="GeneCards" id="COL6A2"/>
<dbReference type="GeneReviews" id="COL6A2"/>
<dbReference type="HGNC" id="HGNC:2212">
    <property type="gene designation" value="COL6A2"/>
</dbReference>
<dbReference type="HPA" id="ENSG00000142173">
    <property type="expression patterns" value="Low tissue specificity"/>
</dbReference>
<dbReference type="MalaCards" id="COL6A2"/>
<dbReference type="MIM" id="120240">
    <property type="type" value="gene"/>
</dbReference>
<dbReference type="MIM" id="255600">
    <property type="type" value="phenotype"/>
</dbReference>
<dbReference type="MIM" id="620725">
    <property type="type" value="phenotype"/>
</dbReference>
<dbReference type="MIM" id="620727">
    <property type="type" value="phenotype"/>
</dbReference>
<dbReference type="neXtProt" id="NX_P12110"/>
<dbReference type="OpenTargets" id="ENSG00000142173"/>
<dbReference type="Orphanet" id="610">
    <property type="disease" value="Bethlem muscular dystrophy"/>
</dbReference>
<dbReference type="Orphanet" id="646113">
    <property type="disease" value="Intermediate collagen VI-related muscular dystrophy"/>
</dbReference>
<dbReference type="Orphanet" id="289380">
    <property type="disease" value="Myosclerosis"/>
</dbReference>
<dbReference type="Orphanet" id="75840">
    <property type="disease" value="Ullrich congenital muscular dystrophy"/>
</dbReference>
<dbReference type="PharmGKB" id="PA26728"/>
<dbReference type="VEuPathDB" id="HostDB:ENSG00000142173"/>
<dbReference type="eggNOG" id="KOG3544">
    <property type="taxonomic scope" value="Eukaryota"/>
</dbReference>
<dbReference type="GeneTree" id="ENSGT00940000155682"/>
<dbReference type="HOGENOM" id="CLU_009158_2_0_1"/>
<dbReference type="InParanoid" id="P12110"/>
<dbReference type="OMA" id="LIFRPME"/>
<dbReference type="OrthoDB" id="9944853at2759"/>
<dbReference type="PAN-GO" id="P12110">
    <property type="GO annotations" value="2 GO annotations based on evolutionary models"/>
</dbReference>
<dbReference type="PhylomeDB" id="P12110"/>
<dbReference type="TreeFam" id="TF331207"/>
<dbReference type="PathwayCommons" id="P12110"/>
<dbReference type="Reactome" id="R-HSA-1442490">
    <property type="pathway name" value="Collagen degradation"/>
</dbReference>
<dbReference type="Reactome" id="R-HSA-1650814">
    <property type="pathway name" value="Collagen biosynthesis and modifying enzymes"/>
</dbReference>
<dbReference type="Reactome" id="R-HSA-186797">
    <property type="pathway name" value="Signaling by PDGF"/>
</dbReference>
<dbReference type="Reactome" id="R-HSA-2022090">
    <property type="pathway name" value="Assembly of collagen fibrils and other multimeric structures"/>
</dbReference>
<dbReference type="Reactome" id="R-HSA-216083">
    <property type="pathway name" value="Integrin cell surface interactions"/>
</dbReference>
<dbReference type="Reactome" id="R-HSA-3000178">
    <property type="pathway name" value="ECM proteoglycans"/>
</dbReference>
<dbReference type="Reactome" id="R-HSA-419037">
    <property type="pathway name" value="NCAM1 interactions"/>
</dbReference>
<dbReference type="Reactome" id="R-HSA-8948216">
    <property type="pathway name" value="Collagen chain trimerization"/>
</dbReference>
<dbReference type="SignaLink" id="P12110"/>
<dbReference type="SIGNOR" id="P12110"/>
<dbReference type="BioGRID-ORCS" id="1292">
    <property type="hits" value="9 hits in 1146 CRISPR screens"/>
</dbReference>
<dbReference type="ChiTaRS" id="COL6A2">
    <property type="organism name" value="human"/>
</dbReference>
<dbReference type="GeneWiki" id="COL6A2"/>
<dbReference type="GenomeRNAi" id="1292"/>
<dbReference type="Pharos" id="P12110">
    <property type="development level" value="Tbio"/>
</dbReference>
<dbReference type="PRO" id="PR:P12110"/>
<dbReference type="Proteomes" id="UP000005640">
    <property type="component" value="Chromosome 21"/>
</dbReference>
<dbReference type="RNAct" id="P12110">
    <property type="molecule type" value="protein"/>
</dbReference>
<dbReference type="Bgee" id="ENSG00000142173">
    <property type="expression patterns" value="Expressed in stromal cell of endometrium and 179 other cell types or tissues"/>
</dbReference>
<dbReference type="ExpressionAtlas" id="P12110">
    <property type="expression patterns" value="baseline and differential"/>
</dbReference>
<dbReference type="GO" id="GO:0005589">
    <property type="term" value="C:collagen type VI trimer"/>
    <property type="evidence" value="ECO:0000304"/>
    <property type="project" value="GO_Central"/>
</dbReference>
<dbReference type="GO" id="GO:0062023">
    <property type="term" value="C:collagen-containing extracellular matrix"/>
    <property type="evidence" value="ECO:0007005"/>
    <property type="project" value="UniProtKB"/>
</dbReference>
<dbReference type="GO" id="GO:0005788">
    <property type="term" value="C:endoplasmic reticulum lumen"/>
    <property type="evidence" value="ECO:0000304"/>
    <property type="project" value="Reactome"/>
</dbReference>
<dbReference type="GO" id="GO:0070062">
    <property type="term" value="C:extracellular exosome"/>
    <property type="evidence" value="ECO:0007005"/>
    <property type="project" value="UniProtKB"/>
</dbReference>
<dbReference type="GO" id="GO:0005576">
    <property type="term" value="C:extracellular region"/>
    <property type="evidence" value="ECO:0000314"/>
    <property type="project" value="MGI"/>
</dbReference>
<dbReference type="GO" id="GO:0005615">
    <property type="term" value="C:extracellular space"/>
    <property type="evidence" value="ECO:0007005"/>
    <property type="project" value="BHF-UCL"/>
</dbReference>
<dbReference type="GO" id="GO:1903561">
    <property type="term" value="C:extracellular vesicle"/>
    <property type="evidence" value="ECO:0007005"/>
    <property type="project" value="UniProtKB"/>
</dbReference>
<dbReference type="GO" id="GO:0032991">
    <property type="term" value="C:protein-containing complex"/>
    <property type="evidence" value="ECO:0000353"/>
    <property type="project" value="MGI"/>
</dbReference>
<dbReference type="GO" id="GO:0042383">
    <property type="term" value="C:sarcolemma"/>
    <property type="evidence" value="ECO:0007669"/>
    <property type="project" value="Ensembl"/>
</dbReference>
<dbReference type="GO" id="GO:0005518">
    <property type="term" value="F:collagen binding"/>
    <property type="evidence" value="ECO:0000353"/>
    <property type="project" value="MGI"/>
</dbReference>
<dbReference type="GO" id="GO:0030020">
    <property type="term" value="F:extracellular matrix structural constituent conferring tensile strength"/>
    <property type="evidence" value="ECO:0007005"/>
    <property type="project" value="BHF-UCL"/>
</dbReference>
<dbReference type="GO" id="GO:0007155">
    <property type="term" value="P:cell adhesion"/>
    <property type="evidence" value="ECO:0007669"/>
    <property type="project" value="UniProtKB-KW"/>
</dbReference>
<dbReference type="GO" id="GO:0051402">
    <property type="term" value="P:neuron apoptotic process"/>
    <property type="evidence" value="ECO:0007669"/>
    <property type="project" value="Ensembl"/>
</dbReference>
<dbReference type="GO" id="GO:0043491">
    <property type="term" value="P:phosphatidylinositol 3-kinase/protein kinase B signal transduction"/>
    <property type="evidence" value="ECO:0007669"/>
    <property type="project" value="Ensembl"/>
</dbReference>
<dbReference type="GO" id="GO:0009749">
    <property type="term" value="P:response to glucose"/>
    <property type="evidence" value="ECO:0007669"/>
    <property type="project" value="Ensembl"/>
</dbReference>
<dbReference type="GO" id="GO:0009411">
    <property type="term" value="P:response to UV"/>
    <property type="evidence" value="ECO:0007669"/>
    <property type="project" value="Ensembl"/>
</dbReference>
<dbReference type="CDD" id="cd01480">
    <property type="entry name" value="vWA_collagen_alpha_1-VI-type"/>
    <property type="match status" value="2"/>
</dbReference>
<dbReference type="CDD" id="cd00198">
    <property type="entry name" value="vWFA"/>
    <property type="match status" value="1"/>
</dbReference>
<dbReference type="FunFam" id="1.20.5.320:FF:000005">
    <property type="entry name" value="collagen alpha-2(VI) chain isoform X1"/>
    <property type="match status" value="1"/>
</dbReference>
<dbReference type="FunFam" id="3.40.50.410:FF:000027">
    <property type="entry name" value="collagen alpha-2(VI) chain isoform X1"/>
    <property type="match status" value="1"/>
</dbReference>
<dbReference type="FunFam" id="3.40.50.410:FF:000052">
    <property type="entry name" value="collagen alpha-2(VI) chain isoform X1"/>
    <property type="match status" value="1"/>
</dbReference>
<dbReference type="FunFam" id="3.40.50.410:FF:000026">
    <property type="entry name" value="Collagen, type VI, alpha 1"/>
    <property type="match status" value="1"/>
</dbReference>
<dbReference type="Gene3D" id="1.20.5.320">
    <property type="entry name" value="6-Phosphogluconate Dehydrogenase, domain 3"/>
    <property type="match status" value="1"/>
</dbReference>
<dbReference type="Gene3D" id="3.40.50.410">
    <property type="entry name" value="von Willebrand factor, type A domain"/>
    <property type="match status" value="3"/>
</dbReference>
<dbReference type="InterPro" id="IPR008160">
    <property type="entry name" value="Collagen"/>
</dbReference>
<dbReference type="InterPro" id="IPR052229">
    <property type="entry name" value="Collagen-VI/PIF"/>
</dbReference>
<dbReference type="InterPro" id="IPR002035">
    <property type="entry name" value="VWF_A"/>
</dbReference>
<dbReference type="InterPro" id="IPR036465">
    <property type="entry name" value="vWFA_dom_sf"/>
</dbReference>
<dbReference type="PANTHER" id="PTHR22588">
    <property type="entry name" value="VWFA DOMAIN-CONTAINING PROTEIN"/>
    <property type="match status" value="1"/>
</dbReference>
<dbReference type="PANTHER" id="PTHR22588:SF3">
    <property type="entry name" value="VWFA DOMAIN-CONTAINING PROTEIN"/>
    <property type="match status" value="1"/>
</dbReference>
<dbReference type="Pfam" id="PF01391">
    <property type="entry name" value="Collagen"/>
    <property type="match status" value="4"/>
</dbReference>
<dbReference type="Pfam" id="PF00092">
    <property type="entry name" value="VWA"/>
    <property type="match status" value="3"/>
</dbReference>
<dbReference type="PRINTS" id="PR00453">
    <property type="entry name" value="VWFADOMAIN"/>
</dbReference>
<dbReference type="SMART" id="SM00327">
    <property type="entry name" value="VWA"/>
    <property type="match status" value="3"/>
</dbReference>
<dbReference type="SUPFAM" id="SSF53300">
    <property type="entry name" value="vWA-like"/>
    <property type="match status" value="3"/>
</dbReference>
<dbReference type="PROSITE" id="PS50234">
    <property type="entry name" value="VWFA"/>
    <property type="match status" value="3"/>
</dbReference>
<gene>
    <name type="primary">COL6A2</name>
</gene>
<organism>
    <name type="scientific">Homo sapiens</name>
    <name type="common">Human</name>
    <dbReference type="NCBI Taxonomy" id="9606"/>
    <lineage>
        <taxon>Eukaryota</taxon>
        <taxon>Metazoa</taxon>
        <taxon>Chordata</taxon>
        <taxon>Craniata</taxon>
        <taxon>Vertebrata</taxon>
        <taxon>Euteleostomi</taxon>
        <taxon>Mammalia</taxon>
        <taxon>Eutheria</taxon>
        <taxon>Euarchontoglires</taxon>
        <taxon>Primates</taxon>
        <taxon>Haplorrhini</taxon>
        <taxon>Catarrhini</taxon>
        <taxon>Hominidae</taxon>
        <taxon>Homo</taxon>
    </lineage>
</organism>
<proteinExistence type="evidence at protein level"/>